<feature type="chain" id="PRO_0000249666" description="N-acetylmuramic acid 6-phosphate etherase">
    <location>
        <begin position="1"/>
        <end position="311"/>
    </location>
</feature>
<feature type="domain" description="SIS" evidence="1">
    <location>
        <begin position="66"/>
        <end position="229"/>
    </location>
</feature>
<feature type="active site" description="Proton donor" evidence="1">
    <location>
        <position position="94"/>
    </location>
</feature>
<feature type="active site" evidence="1">
    <location>
        <position position="125"/>
    </location>
</feature>
<gene>
    <name evidence="1" type="primary">murQ</name>
    <name type="ordered locus">SAV_3924</name>
</gene>
<accession>Q82GH3</accession>
<organism>
    <name type="scientific">Streptomyces avermitilis (strain ATCC 31267 / DSM 46492 / JCM 5070 / NBRC 14893 / NCIMB 12804 / NRRL 8165 / MA-4680)</name>
    <dbReference type="NCBI Taxonomy" id="227882"/>
    <lineage>
        <taxon>Bacteria</taxon>
        <taxon>Bacillati</taxon>
        <taxon>Actinomycetota</taxon>
        <taxon>Actinomycetes</taxon>
        <taxon>Kitasatosporales</taxon>
        <taxon>Streptomycetaceae</taxon>
        <taxon>Streptomyces</taxon>
    </lineage>
</organism>
<evidence type="ECO:0000255" key="1">
    <source>
        <dbReference type="HAMAP-Rule" id="MF_00068"/>
    </source>
</evidence>
<name>MURQ_STRAW</name>
<dbReference type="EC" id="4.2.1.126" evidence="1"/>
<dbReference type="EMBL" id="BA000030">
    <property type="protein sequence ID" value="BAC71636.1"/>
    <property type="molecule type" value="Genomic_DNA"/>
</dbReference>
<dbReference type="RefSeq" id="WP_010985355.1">
    <property type="nucleotide sequence ID" value="NZ_JZJK01000090.1"/>
</dbReference>
<dbReference type="SMR" id="Q82GH3"/>
<dbReference type="GeneID" id="41540991"/>
<dbReference type="KEGG" id="sma:SAVERM_3924"/>
<dbReference type="eggNOG" id="COG2103">
    <property type="taxonomic scope" value="Bacteria"/>
</dbReference>
<dbReference type="HOGENOM" id="CLU_049049_1_1_11"/>
<dbReference type="OrthoDB" id="9813395at2"/>
<dbReference type="UniPathway" id="UPA00342"/>
<dbReference type="Proteomes" id="UP000000428">
    <property type="component" value="Chromosome"/>
</dbReference>
<dbReference type="GO" id="GO:0097367">
    <property type="term" value="F:carbohydrate derivative binding"/>
    <property type="evidence" value="ECO:0007669"/>
    <property type="project" value="InterPro"/>
</dbReference>
<dbReference type="GO" id="GO:0016835">
    <property type="term" value="F:carbon-oxygen lyase activity"/>
    <property type="evidence" value="ECO:0007669"/>
    <property type="project" value="UniProtKB-UniRule"/>
</dbReference>
<dbReference type="GO" id="GO:0016803">
    <property type="term" value="F:ether hydrolase activity"/>
    <property type="evidence" value="ECO:0007669"/>
    <property type="project" value="TreeGrafter"/>
</dbReference>
<dbReference type="GO" id="GO:0046348">
    <property type="term" value="P:amino sugar catabolic process"/>
    <property type="evidence" value="ECO:0007669"/>
    <property type="project" value="InterPro"/>
</dbReference>
<dbReference type="GO" id="GO:0097173">
    <property type="term" value="P:N-acetylmuramic acid catabolic process"/>
    <property type="evidence" value="ECO:0007669"/>
    <property type="project" value="UniProtKB-UniPathway"/>
</dbReference>
<dbReference type="GO" id="GO:0009254">
    <property type="term" value="P:peptidoglycan turnover"/>
    <property type="evidence" value="ECO:0007669"/>
    <property type="project" value="TreeGrafter"/>
</dbReference>
<dbReference type="CDD" id="cd05007">
    <property type="entry name" value="SIS_Etherase"/>
    <property type="match status" value="1"/>
</dbReference>
<dbReference type="FunFam" id="1.10.8.1080:FF:000001">
    <property type="entry name" value="N-acetylmuramic acid 6-phosphate etherase"/>
    <property type="match status" value="1"/>
</dbReference>
<dbReference type="FunFam" id="3.40.50.10490:FF:000014">
    <property type="entry name" value="N-acetylmuramic acid 6-phosphate etherase"/>
    <property type="match status" value="1"/>
</dbReference>
<dbReference type="Gene3D" id="1.10.8.1080">
    <property type="match status" value="1"/>
</dbReference>
<dbReference type="Gene3D" id="3.40.50.10490">
    <property type="entry name" value="Glucose-6-phosphate isomerase like protein, domain 1"/>
    <property type="match status" value="1"/>
</dbReference>
<dbReference type="HAMAP" id="MF_00068">
    <property type="entry name" value="MurQ"/>
    <property type="match status" value="1"/>
</dbReference>
<dbReference type="InterPro" id="IPR005488">
    <property type="entry name" value="Etherase_MurQ"/>
</dbReference>
<dbReference type="InterPro" id="IPR005486">
    <property type="entry name" value="Glucokinase_regulatory_CS"/>
</dbReference>
<dbReference type="InterPro" id="IPR040190">
    <property type="entry name" value="MURQ/GCKR"/>
</dbReference>
<dbReference type="InterPro" id="IPR001347">
    <property type="entry name" value="SIS_dom"/>
</dbReference>
<dbReference type="InterPro" id="IPR046348">
    <property type="entry name" value="SIS_dom_sf"/>
</dbReference>
<dbReference type="NCBIfam" id="TIGR00274">
    <property type="entry name" value="N-acetylmuramic acid 6-phosphate etherase"/>
    <property type="match status" value="1"/>
</dbReference>
<dbReference type="NCBIfam" id="NF003915">
    <property type="entry name" value="PRK05441.1"/>
    <property type="match status" value="1"/>
</dbReference>
<dbReference type="NCBIfam" id="NF009222">
    <property type="entry name" value="PRK12570.1"/>
    <property type="match status" value="1"/>
</dbReference>
<dbReference type="PANTHER" id="PTHR10088">
    <property type="entry name" value="GLUCOKINASE REGULATORY PROTEIN"/>
    <property type="match status" value="1"/>
</dbReference>
<dbReference type="PANTHER" id="PTHR10088:SF4">
    <property type="entry name" value="GLUCOKINASE REGULATORY PROTEIN"/>
    <property type="match status" value="1"/>
</dbReference>
<dbReference type="Pfam" id="PF22645">
    <property type="entry name" value="GKRP_SIS_N"/>
    <property type="match status" value="1"/>
</dbReference>
<dbReference type="SUPFAM" id="SSF53697">
    <property type="entry name" value="SIS domain"/>
    <property type="match status" value="1"/>
</dbReference>
<dbReference type="PROSITE" id="PS01272">
    <property type="entry name" value="GCKR"/>
    <property type="match status" value="1"/>
</dbReference>
<dbReference type="PROSITE" id="PS51464">
    <property type="entry name" value="SIS"/>
    <property type="match status" value="1"/>
</dbReference>
<comment type="function">
    <text evidence="1">Specifically catalyzes the cleavage of the D-lactyl ether substituent of MurNAc 6-phosphate, producing GlcNAc 6-phosphate and D-lactate.</text>
</comment>
<comment type="catalytic activity">
    <reaction evidence="1">
        <text>N-acetyl-D-muramate 6-phosphate + H2O = N-acetyl-D-glucosamine 6-phosphate + (R)-lactate</text>
        <dbReference type="Rhea" id="RHEA:26410"/>
        <dbReference type="ChEBI" id="CHEBI:15377"/>
        <dbReference type="ChEBI" id="CHEBI:16004"/>
        <dbReference type="ChEBI" id="CHEBI:57513"/>
        <dbReference type="ChEBI" id="CHEBI:58722"/>
        <dbReference type="EC" id="4.2.1.126"/>
    </reaction>
</comment>
<comment type="pathway">
    <text evidence="1">Amino-sugar metabolism; N-acetylmuramate degradation.</text>
</comment>
<comment type="subunit">
    <text evidence="1">Homodimer.</text>
</comment>
<comment type="miscellaneous">
    <text evidence="1">A lyase-type mechanism (elimination/hydration) is suggested for the cleavage of the lactyl ether bond of MurNAc 6-phosphate, with the formation of an alpha,beta-unsaturated aldehyde intermediate with (E)-stereochemistry, followed by the syn addition of water to give product.</text>
</comment>
<comment type="similarity">
    <text evidence="1">Belongs to the GCKR-like family. MurNAc-6-P etherase subfamily.</text>
</comment>
<protein>
    <recommendedName>
        <fullName evidence="1">N-acetylmuramic acid 6-phosphate etherase</fullName>
        <shortName evidence="1">MurNAc-6-P etherase</shortName>
        <ecNumber evidence="1">4.2.1.126</ecNumber>
    </recommendedName>
    <alternativeName>
        <fullName evidence="1">N-acetylmuramic acid 6-phosphate hydrolase</fullName>
    </alternativeName>
    <alternativeName>
        <fullName evidence="1">N-acetylmuramic acid 6-phosphate lyase</fullName>
    </alternativeName>
</protein>
<proteinExistence type="inferred from homology"/>
<keyword id="KW-0119">Carbohydrate metabolism</keyword>
<keyword id="KW-0456">Lyase</keyword>
<keyword id="KW-1185">Reference proteome</keyword>
<sequence length="311" mass="31786">MTSMSHHRSLQAELETLTTEAFRPELAEIDQLPTLEIARLMNGEDATVPAAVAARLPQIAAAIDAVADRMARGGRLVYAGAGTAGRLGVLDASECPPTFNTDPSEVVGLIAGGPSAMVTSIEGAEDSKELAAGDLAGLGLTADDTVVGVSASGRTPYAIGAVEYARARGALTVGLSCNADSALAAAADHGIEIVAGPELLTGSTRLKAGTAQKLVLNMLSTITMIRLGKTYGNLMVDVRASNEKLRARSRRIVALATGAADEEVERALAATDGEVKNAILTILGGVDGPTAARLLEESDGHLRAALAAAPR</sequence>
<reference key="1">
    <citation type="journal article" date="2001" name="Proc. Natl. Acad. Sci. U.S.A.">
        <title>Genome sequence of an industrial microorganism Streptomyces avermitilis: deducing the ability of producing secondary metabolites.</title>
        <authorList>
            <person name="Omura S."/>
            <person name="Ikeda H."/>
            <person name="Ishikawa J."/>
            <person name="Hanamoto A."/>
            <person name="Takahashi C."/>
            <person name="Shinose M."/>
            <person name="Takahashi Y."/>
            <person name="Horikawa H."/>
            <person name="Nakazawa H."/>
            <person name="Osonoe T."/>
            <person name="Kikuchi H."/>
            <person name="Shiba T."/>
            <person name="Sakaki Y."/>
            <person name="Hattori M."/>
        </authorList>
    </citation>
    <scope>NUCLEOTIDE SEQUENCE [LARGE SCALE GENOMIC DNA]</scope>
    <source>
        <strain>ATCC 31267 / DSM 46492 / JCM 5070 / NBRC 14893 / NCIMB 12804 / NRRL 8165 / MA-4680</strain>
    </source>
</reference>
<reference key="2">
    <citation type="journal article" date="2003" name="Nat. Biotechnol.">
        <title>Complete genome sequence and comparative analysis of the industrial microorganism Streptomyces avermitilis.</title>
        <authorList>
            <person name="Ikeda H."/>
            <person name="Ishikawa J."/>
            <person name="Hanamoto A."/>
            <person name="Shinose M."/>
            <person name="Kikuchi H."/>
            <person name="Shiba T."/>
            <person name="Sakaki Y."/>
            <person name="Hattori M."/>
            <person name="Omura S."/>
        </authorList>
    </citation>
    <scope>NUCLEOTIDE SEQUENCE [LARGE SCALE GENOMIC DNA]</scope>
    <source>
        <strain>ATCC 31267 / DSM 46492 / JCM 5070 / NBRC 14893 / NCIMB 12804 / NRRL 8165 / MA-4680</strain>
    </source>
</reference>